<comment type="function">
    <text evidence="1">Component of the Mediator complex, a coactivator involved in the regulated transcription of nearly all RNA polymerase II-dependent genes. Mediator functions as a bridge to convey information from gene-specific regulatory proteins to the basal RNA polymerase II transcription machinery. Mediator is recruited to promoters by direct interactions with regulatory proteins and serves as a scaffold for the assembly of a functional preinitiation complex with RNA polymerase II and the general transcription factors (By similarity).</text>
</comment>
<comment type="subunit">
    <text evidence="1">Component of the Mediator complex.</text>
</comment>
<comment type="subcellular location">
    <subcellularLocation>
        <location evidence="1">Nucleus</location>
    </subcellularLocation>
</comment>
<comment type="similarity">
    <text evidence="3">Belongs to the Mediator complex subunit 31 family.</text>
</comment>
<comment type="sequence caution" evidence="3">
    <conflict type="erroneous initiation">
        <sequence resource="EMBL-CDS" id="EAU35829"/>
    </conflict>
</comment>
<reference key="1">
    <citation type="submission" date="2005-09" db="EMBL/GenBank/DDBJ databases">
        <title>Annotation of the Aspergillus terreus NIH2624 genome.</title>
        <authorList>
            <person name="Birren B.W."/>
            <person name="Lander E.S."/>
            <person name="Galagan J.E."/>
            <person name="Nusbaum C."/>
            <person name="Devon K."/>
            <person name="Henn M."/>
            <person name="Ma L.-J."/>
            <person name="Jaffe D.B."/>
            <person name="Butler J."/>
            <person name="Alvarez P."/>
            <person name="Gnerre S."/>
            <person name="Grabherr M."/>
            <person name="Kleber M."/>
            <person name="Mauceli E.W."/>
            <person name="Brockman W."/>
            <person name="Rounsley S."/>
            <person name="Young S.K."/>
            <person name="LaButti K."/>
            <person name="Pushparaj V."/>
            <person name="DeCaprio D."/>
            <person name="Crawford M."/>
            <person name="Koehrsen M."/>
            <person name="Engels R."/>
            <person name="Montgomery P."/>
            <person name="Pearson M."/>
            <person name="Howarth C."/>
            <person name="Larson L."/>
            <person name="Luoma S."/>
            <person name="White J."/>
            <person name="Alvarado L."/>
            <person name="Kodira C.D."/>
            <person name="Zeng Q."/>
            <person name="Oleary S."/>
            <person name="Yandava C."/>
            <person name="Denning D.W."/>
            <person name="Nierman W.C."/>
            <person name="Milne T."/>
            <person name="Madden K."/>
        </authorList>
    </citation>
    <scope>NUCLEOTIDE SEQUENCE [LARGE SCALE GENOMIC DNA]</scope>
    <source>
        <strain>NIH 2624 / FGSC A1156</strain>
    </source>
</reference>
<organism>
    <name type="scientific">Aspergillus terreus (strain NIH 2624 / FGSC A1156)</name>
    <dbReference type="NCBI Taxonomy" id="341663"/>
    <lineage>
        <taxon>Eukaryota</taxon>
        <taxon>Fungi</taxon>
        <taxon>Dikarya</taxon>
        <taxon>Ascomycota</taxon>
        <taxon>Pezizomycotina</taxon>
        <taxon>Eurotiomycetes</taxon>
        <taxon>Eurotiomycetidae</taxon>
        <taxon>Eurotiales</taxon>
        <taxon>Aspergillaceae</taxon>
        <taxon>Aspergillus</taxon>
        <taxon>Aspergillus subgen. Circumdati</taxon>
    </lineage>
</organism>
<feature type="chain" id="PRO_0000305718" description="Mediator of RNA polymerase II transcription subunit 31">
    <location>
        <begin position="1"/>
        <end position="160"/>
    </location>
</feature>
<feature type="region of interest" description="Disordered" evidence="2">
    <location>
        <begin position="124"/>
        <end position="160"/>
    </location>
</feature>
<feature type="compositionally biased region" description="Polar residues" evidence="2">
    <location>
        <begin position="147"/>
        <end position="160"/>
    </location>
</feature>
<dbReference type="EMBL" id="CH476598">
    <property type="protein sequence ID" value="EAU35829.1"/>
    <property type="status" value="ALT_INIT"/>
    <property type="molecule type" value="Genomic_DNA"/>
</dbReference>
<dbReference type="RefSeq" id="XP_001213205.1">
    <property type="nucleotide sequence ID" value="XM_001213205.1"/>
</dbReference>
<dbReference type="STRING" id="341663.Q0CQK7"/>
<dbReference type="EnsemblFungi" id="EAU35829">
    <property type="protein sequence ID" value="EAU35829"/>
    <property type="gene ID" value="ATEG_04027"/>
</dbReference>
<dbReference type="GeneID" id="4318672"/>
<dbReference type="eggNOG" id="KOG4086">
    <property type="taxonomic scope" value="Eukaryota"/>
</dbReference>
<dbReference type="OrthoDB" id="10257739at2759"/>
<dbReference type="Proteomes" id="UP000007963">
    <property type="component" value="Unassembled WGS sequence"/>
</dbReference>
<dbReference type="GO" id="GO:0016592">
    <property type="term" value="C:mediator complex"/>
    <property type="evidence" value="ECO:0007669"/>
    <property type="project" value="InterPro"/>
</dbReference>
<dbReference type="GO" id="GO:0003712">
    <property type="term" value="F:transcription coregulator activity"/>
    <property type="evidence" value="ECO:0007669"/>
    <property type="project" value="InterPro"/>
</dbReference>
<dbReference type="GO" id="GO:0006355">
    <property type="term" value="P:regulation of DNA-templated transcription"/>
    <property type="evidence" value="ECO:0007669"/>
    <property type="project" value="InterPro"/>
</dbReference>
<dbReference type="FunFam" id="1.10.10.1340:FF:000002">
    <property type="entry name" value="Mediator of RNA polymerase II transcription subunit 31"/>
    <property type="match status" value="1"/>
</dbReference>
<dbReference type="Gene3D" id="1.10.10.1340">
    <property type="entry name" value="Mediator of RNA polymerase II, submodule Med31 (Soh1)"/>
    <property type="match status" value="1"/>
</dbReference>
<dbReference type="InterPro" id="IPR038089">
    <property type="entry name" value="Med31_sf"/>
</dbReference>
<dbReference type="InterPro" id="IPR008831">
    <property type="entry name" value="Mediator_Med31"/>
</dbReference>
<dbReference type="PANTHER" id="PTHR13186">
    <property type="entry name" value="MEDIATOR OF RNA POLYMERASE II TRANSCRIPTION SUBUNIT 31"/>
    <property type="match status" value="1"/>
</dbReference>
<dbReference type="Pfam" id="PF05669">
    <property type="entry name" value="Med31"/>
    <property type="match status" value="1"/>
</dbReference>
<accession>Q0CQK7</accession>
<proteinExistence type="inferred from homology"/>
<protein>
    <recommendedName>
        <fullName>Mediator of RNA polymerase II transcription subunit 31</fullName>
    </recommendedName>
    <alternativeName>
        <fullName>Mediator complex subunit 31</fullName>
    </alternativeName>
</protein>
<evidence type="ECO:0000250" key="1"/>
<evidence type="ECO:0000256" key="2">
    <source>
        <dbReference type="SAM" id="MobiDB-lite"/>
    </source>
</evidence>
<evidence type="ECO:0000305" key="3"/>
<sequence>MDPQPGDQAQQPPPPTLTHPRFTLELEFVSSLANPYYLSHLAVNYPNLLGINKSGDDNDTNDSGDPDAQAFAAYLAYLYSYWKTPEYAQFLTHPGATLRALRLLQEDTFRRDIIRPQVIEGLAGTGIENEQGGTEANNPGEAEGEQTKGTADQQDGSSKT</sequence>
<gene>
    <name type="primary">soh1</name>
    <name type="synonym">med31</name>
    <name type="ORF">ATEG_04027</name>
</gene>
<name>MED31_ASPTN</name>
<keyword id="KW-0010">Activator</keyword>
<keyword id="KW-0539">Nucleus</keyword>
<keyword id="KW-1185">Reference proteome</keyword>
<keyword id="KW-0804">Transcription</keyword>
<keyword id="KW-0805">Transcription regulation</keyword>